<protein>
    <recommendedName>
        <fullName>Uncharacterized protein F02A9.1</fullName>
    </recommendedName>
</protein>
<reference key="1">
    <citation type="journal article" date="1994" name="Nature">
        <title>2.2 Mb of contiguous nucleotide sequence from chromosome III of C. elegans.</title>
        <authorList>
            <person name="Wilson R."/>
            <person name="Ainscough R."/>
            <person name="Anderson K."/>
            <person name="Baynes C."/>
            <person name="Berks M."/>
            <person name="Bonfield J."/>
            <person name="Burton J."/>
            <person name="Connell M."/>
            <person name="Copsey T."/>
            <person name="Cooper J."/>
            <person name="Coulson A."/>
            <person name="Craxton M."/>
            <person name="Dear S."/>
            <person name="Du Z."/>
            <person name="Durbin R."/>
            <person name="Favello A."/>
            <person name="Fraser A."/>
            <person name="Fulton L."/>
            <person name="Gardner A."/>
            <person name="Green P."/>
            <person name="Hawkins T."/>
            <person name="Hillier L."/>
            <person name="Jier M."/>
            <person name="Johnston L."/>
            <person name="Jones M."/>
            <person name="Kershaw J."/>
            <person name="Kirsten J."/>
            <person name="Laisster N."/>
            <person name="Latreille P."/>
            <person name="Lightning J."/>
            <person name="Lloyd C."/>
            <person name="Mortimore B."/>
            <person name="O'Callaghan M."/>
            <person name="Parsons J."/>
            <person name="Percy C."/>
            <person name="Rifken L."/>
            <person name="Roopra A."/>
            <person name="Saunders D."/>
            <person name="Shownkeen R."/>
            <person name="Sims M."/>
            <person name="Smaldon N."/>
            <person name="Smith A."/>
            <person name="Smith M."/>
            <person name="Sonnhammer E."/>
            <person name="Staden R."/>
            <person name="Sulston J."/>
            <person name="Thierry-Mieg J."/>
            <person name="Thomas K."/>
            <person name="Vaudin M."/>
            <person name="Vaughan K."/>
            <person name="Waterston R."/>
            <person name="Watson A."/>
            <person name="Weinstock L."/>
            <person name="Wilkinson-Sproat J."/>
            <person name="Wohldman P."/>
        </authorList>
    </citation>
    <scope>NUCLEOTIDE SEQUENCE [LARGE SCALE GENOMIC DNA]</scope>
    <source>
        <strain>Bristol N2</strain>
    </source>
</reference>
<reference key="2">
    <citation type="journal article" date="1998" name="Science">
        <title>Genome sequence of the nematode C. elegans: a platform for investigating biology.</title>
        <authorList>
            <consortium name="The C. elegans sequencing consortium"/>
        </authorList>
    </citation>
    <scope>NUCLEOTIDE SEQUENCE [LARGE SCALE GENOMIC DNA]</scope>
    <source>
        <strain>Bristol N2</strain>
    </source>
</reference>
<comment type="subcellular location">
    <subcellularLocation>
        <location evidence="2">Membrane</location>
        <topology evidence="2">Single-pass membrane protein</topology>
    </subcellularLocation>
</comment>
<proteinExistence type="inferred from homology"/>
<organism>
    <name type="scientific">Caenorhabditis elegans</name>
    <dbReference type="NCBI Taxonomy" id="6239"/>
    <lineage>
        <taxon>Eukaryota</taxon>
        <taxon>Metazoa</taxon>
        <taxon>Ecdysozoa</taxon>
        <taxon>Nematoda</taxon>
        <taxon>Chromadorea</taxon>
        <taxon>Rhabditida</taxon>
        <taxon>Rhabditina</taxon>
        <taxon>Rhabditomorpha</taxon>
        <taxon>Rhabditoidea</taxon>
        <taxon>Rhabditidae</taxon>
        <taxon>Peloderinae</taxon>
        <taxon>Caenorhabditis</taxon>
    </lineage>
</organism>
<sequence>MNAMFHSLFALSFVSLVASINNQNSRYDKMFLAMVCQDQNGCEVNIRFLKQSFPDSNSTEPLYEHTMIYNNGSLDEITIDVTEDVNIIEFTFTAPDENGTTIVETDSWELNFSETYFHTIGSLQLVGNLPCGRYGCPQTPLCNGSCRFMVIVSLAAFCISVLAGLALQTVYVSFLGFRKTRKAVELRDTLRLTEAAELAH</sequence>
<gene>
    <name type="ORF">F02A9.1</name>
</gene>
<dbReference type="EMBL" id="Z19555">
    <property type="protein sequence ID" value="CAA79614.1"/>
    <property type="molecule type" value="Genomic_DNA"/>
</dbReference>
<dbReference type="PIR" id="S28308">
    <property type="entry name" value="S28308"/>
</dbReference>
<dbReference type="PIR" id="S28309">
    <property type="entry name" value="S28309"/>
</dbReference>
<dbReference type="RefSeq" id="NP_001021242.1">
    <property type="nucleotide sequence ID" value="NM_001026071.4"/>
</dbReference>
<dbReference type="FunCoup" id="P34380">
    <property type="interactions" value="288"/>
</dbReference>
<dbReference type="STRING" id="6239.F02A9.1.1"/>
<dbReference type="PaxDb" id="6239-F02A9.1"/>
<dbReference type="EnsemblMetazoa" id="F02A9.1.1">
    <property type="protein sequence ID" value="F02A9.1.1"/>
    <property type="gene ID" value="WBGene00008513"/>
</dbReference>
<dbReference type="GeneID" id="184071"/>
<dbReference type="KEGG" id="cel:CELE_F02A9.1"/>
<dbReference type="UCSC" id="F02A9.1">
    <property type="organism name" value="c. elegans"/>
</dbReference>
<dbReference type="AGR" id="WB:WBGene00008513"/>
<dbReference type="CTD" id="184071"/>
<dbReference type="WormBase" id="F02A9.1">
    <property type="protein sequence ID" value="CE00131"/>
    <property type="gene ID" value="WBGene00008513"/>
</dbReference>
<dbReference type="eggNOG" id="ENOG502THY9">
    <property type="taxonomic scope" value="Eukaryota"/>
</dbReference>
<dbReference type="HOGENOM" id="CLU_1349976_0_0_1"/>
<dbReference type="InParanoid" id="P34380"/>
<dbReference type="OMA" id="MFLAMVC"/>
<dbReference type="OrthoDB" id="5798259at2759"/>
<dbReference type="PRO" id="PR:P34380"/>
<dbReference type="Proteomes" id="UP000001940">
    <property type="component" value="Chromosome III"/>
</dbReference>
<dbReference type="Bgee" id="WBGene00008513">
    <property type="expression patterns" value="Expressed in larva and 2 other cell types or tissues"/>
</dbReference>
<dbReference type="GO" id="GO:0016020">
    <property type="term" value="C:membrane"/>
    <property type="evidence" value="ECO:0007669"/>
    <property type="project" value="UniProtKB-SubCell"/>
</dbReference>
<evidence type="ECO:0000255" key="1"/>
<evidence type="ECO:0000305" key="2"/>
<name>YLPA_CAEEL</name>
<accession>P34380</accession>
<accession>P34381</accession>
<feature type="signal peptide" evidence="1">
    <location>
        <begin position="1"/>
        <end position="19"/>
    </location>
</feature>
<feature type="chain" id="PRO_0000065274" description="Uncharacterized protein F02A9.1">
    <location>
        <begin position="20"/>
        <end position="200"/>
    </location>
</feature>
<feature type="transmembrane region" description="Helical" evidence="1">
    <location>
        <begin position="148"/>
        <end position="168"/>
    </location>
</feature>
<keyword id="KW-0472">Membrane</keyword>
<keyword id="KW-1185">Reference proteome</keyword>
<keyword id="KW-0732">Signal</keyword>
<keyword id="KW-0812">Transmembrane</keyword>
<keyword id="KW-1133">Transmembrane helix</keyword>